<evidence type="ECO:0000256" key="1">
    <source>
        <dbReference type="SAM" id="MobiDB-lite"/>
    </source>
</evidence>
<evidence type="ECO:0000269" key="2">
    <source>
    </source>
</evidence>
<evidence type="ECO:0000269" key="3">
    <source>
    </source>
</evidence>
<evidence type="ECO:0000303" key="4">
    <source>
    </source>
</evidence>
<evidence type="ECO:0000305" key="5"/>
<accession>Q9UNN4</accession>
<accession>B4DY14</accession>
<accession>Q53FD9</accession>
<accession>Q5D050</accession>
<reference key="1">
    <citation type="journal article" date="1999" name="J. Biol. Chem.">
        <title>Identification of a general transcription factor TFIIAalpha/beta homolog selectively expressed in testis.</title>
        <authorList>
            <person name="Upadhyaya A.B."/>
            <person name="Lee S.H."/>
            <person name="DeJong J."/>
        </authorList>
    </citation>
    <scope>NUCLEOTIDE SEQUENCE [MRNA] (ISOFORM 1)</scope>
    <scope>FUNCTION</scope>
    <scope>TISSUE SPECIFICITY</scope>
    <source>
        <tissue>Testis</tissue>
    </source>
</reference>
<reference key="2">
    <citation type="submission" date="2005-04" db="EMBL/GenBank/DDBJ databases">
        <authorList>
            <person name="Suzuki Y."/>
            <person name="Sugano S."/>
            <person name="Totoki Y."/>
            <person name="Toyoda A."/>
            <person name="Takeda T."/>
            <person name="Sakaki Y."/>
            <person name="Tanaka A."/>
            <person name="Yokoyama S."/>
        </authorList>
    </citation>
    <scope>NUCLEOTIDE SEQUENCE [MRNA] (ISOFORM 1)</scope>
    <source>
        <tissue>Testis</tissue>
    </source>
</reference>
<reference key="3">
    <citation type="journal article" date="2004" name="Nat. Genet.">
        <title>Complete sequencing and characterization of 21,243 full-length human cDNAs.</title>
        <authorList>
            <person name="Ota T."/>
            <person name="Suzuki Y."/>
            <person name="Nishikawa T."/>
            <person name="Otsuki T."/>
            <person name="Sugiyama T."/>
            <person name="Irie R."/>
            <person name="Wakamatsu A."/>
            <person name="Hayashi K."/>
            <person name="Sato H."/>
            <person name="Nagai K."/>
            <person name="Kimura K."/>
            <person name="Makita H."/>
            <person name="Sekine M."/>
            <person name="Obayashi M."/>
            <person name="Nishi T."/>
            <person name="Shibahara T."/>
            <person name="Tanaka T."/>
            <person name="Ishii S."/>
            <person name="Yamamoto J."/>
            <person name="Saito K."/>
            <person name="Kawai Y."/>
            <person name="Isono Y."/>
            <person name="Nakamura Y."/>
            <person name="Nagahari K."/>
            <person name="Murakami K."/>
            <person name="Yasuda T."/>
            <person name="Iwayanagi T."/>
            <person name="Wagatsuma M."/>
            <person name="Shiratori A."/>
            <person name="Sudo H."/>
            <person name="Hosoiri T."/>
            <person name="Kaku Y."/>
            <person name="Kodaira H."/>
            <person name="Kondo H."/>
            <person name="Sugawara M."/>
            <person name="Takahashi M."/>
            <person name="Kanda K."/>
            <person name="Yokoi T."/>
            <person name="Furuya T."/>
            <person name="Kikkawa E."/>
            <person name="Omura Y."/>
            <person name="Abe K."/>
            <person name="Kamihara K."/>
            <person name="Katsuta N."/>
            <person name="Sato K."/>
            <person name="Tanikawa M."/>
            <person name="Yamazaki M."/>
            <person name="Ninomiya K."/>
            <person name="Ishibashi T."/>
            <person name="Yamashita H."/>
            <person name="Murakawa K."/>
            <person name="Fujimori K."/>
            <person name="Tanai H."/>
            <person name="Kimata M."/>
            <person name="Watanabe M."/>
            <person name="Hiraoka S."/>
            <person name="Chiba Y."/>
            <person name="Ishida S."/>
            <person name="Ono Y."/>
            <person name="Takiguchi S."/>
            <person name="Watanabe S."/>
            <person name="Yosida M."/>
            <person name="Hotuta T."/>
            <person name="Kusano J."/>
            <person name="Kanehori K."/>
            <person name="Takahashi-Fujii A."/>
            <person name="Hara H."/>
            <person name="Tanase T.-O."/>
            <person name="Nomura Y."/>
            <person name="Togiya S."/>
            <person name="Komai F."/>
            <person name="Hara R."/>
            <person name="Takeuchi K."/>
            <person name="Arita M."/>
            <person name="Imose N."/>
            <person name="Musashino K."/>
            <person name="Yuuki H."/>
            <person name="Oshima A."/>
            <person name="Sasaki N."/>
            <person name="Aotsuka S."/>
            <person name="Yoshikawa Y."/>
            <person name="Matsunawa H."/>
            <person name="Ichihara T."/>
            <person name="Shiohata N."/>
            <person name="Sano S."/>
            <person name="Moriya S."/>
            <person name="Momiyama H."/>
            <person name="Satoh N."/>
            <person name="Takami S."/>
            <person name="Terashima Y."/>
            <person name="Suzuki O."/>
            <person name="Nakagawa S."/>
            <person name="Senoh A."/>
            <person name="Mizoguchi H."/>
            <person name="Goto Y."/>
            <person name="Shimizu F."/>
            <person name="Wakebe H."/>
            <person name="Hishigaki H."/>
            <person name="Watanabe T."/>
            <person name="Sugiyama A."/>
            <person name="Takemoto M."/>
            <person name="Kawakami B."/>
            <person name="Yamazaki M."/>
            <person name="Watanabe K."/>
            <person name="Kumagai A."/>
            <person name="Itakura S."/>
            <person name="Fukuzumi Y."/>
            <person name="Fujimori Y."/>
            <person name="Komiyama M."/>
            <person name="Tashiro H."/>
            <person name="Tanigami A."/>
            <person name="Fujiwara T."/>
            <person name="Ono T."/>
            <person name="Yamada K."/>
            <person name="Fujii Y."/>
            <person name="Ozaki K."/>
            <person name="Hirao M."/>
            <person name="Ohmori Y."/>
            <person name="Kawabata A."/>
            <person name="Hikiji T."/>
            <person name="Kobatake N."/>
            <person name="Inagaki H."/>
            <person name="Ikema Y."/>
            <person name="Okamoto S."/>
            <person name="Okitani R."/>
            <person name="Kawakami T."/>
            <person name="Noguchi S."/>
            <person name="Itoh T."/>
            <person name="Shigeta K."/>
            <person name="Senba T."/>
            <person name="Matsumura K."/>
            <person name="Nakajima Y."/>
            <person name="Mizuno T."/>
            <person name="Morinaga M."/>
            <person name="Sasaki M."/>
            <person name="Togashi T."/>
            <person name="Oyama M."/>
            <person name="Hata H."/>
            <person name="Watanabe M."/>
            <person name="Komatsu T."/>
            <person name="Mizushima-Sugano J."/>
            <person name="Satoh T."/>
            <person name="Shirai Y."/>
            <person name="Takahashi Y."/>
            <person name="Nakagawa K."/>
            <person name="Okumura K."/>
            <person name="Nagase T."/>
            <person name="Nomura N."/>
            <person name="Kikuchi H."/>
            <person name="Masuho Y."/>
            <person name="Yamashita R."/>
            <person name="Nakai K."/>
            <person name="Yada T."/>
            <person name="Nakamura Y."/>
            <person name="Ohara O."/>
            <person name="Isogai T."/>
            <person name="Sugano S."/>
        </authorList>
    </citation>
    <scope>NUCLEOTIDE SEQUENCE [LARGE SCALE MRNA] (ISOFORM 2)</scope>
    <source>
        <tissue>Testis</tissue>
    </source>
</reference>
<reference key="4">
    <citation type="journal article" date="2004" name="Genome Res.">
        <title>The status, quality, and expansion of the NIH full-length cDNA project: the Mammalian Gene Collection (MGC).</title>
        <authorList>
            <consortium name="The MGC Project Team"/>
        </authorList>
    </citation>
    <scope>NUCLEOTIDE SEQUENCE [LARGE SCALE MRNA] (ISOFORM 1)</scope>
    <source>
        <tissue>Brain</tissue>
        <tissue>Testis</tissue>
    </source>
</reference>
<reference key="5">
    <citation type="journal article" date="2006" name="Int. J. Mol. Med.">
        <title>Involvement of ALF in human spermatogenesis and male infertility.</title>
        <authorList>
            <person name="Huang M."/>
            <person name="Wang H."/>
            <person name="Li J."/>
            <person name="Zhou Z."/>
            <person name="Du Y."/>
            <person name="Lin M."/>
            <person name="Sha J."/>
        </authorList>
    </citation>
    <scope>SUBCELLULAR LOCATION</scope>
    <scope>TISSUE SPECIFICITY</scope>
    <scope>INDUCTION</scope>
</reference>
<feature type="chain" id="PRO_0000072495" description="TFIIA-alpha and beta-like factor">
    <location>
        <begin position="1"/>
        <end position="478"/>
    </location>
</feature>
<feature type="region of interest" description="Disordered" evidence="1">
    <location>
        <begin position="309"/>
        <end position="427"/>
    </location>
</feature>
<feature type="compositionally biased region" description="Polar residues" evidence="1">
    <location>
        <begin position="390"/>
        <end position="401"/>
    </location>
</feature>
<feature type="compositionally biased region" description="Acidic residues" evidence="1">
    <location>
        <begin position="411"/>
        <end position="427"/>
    </location>
</feature>
<feature type="splice variant" id="VSP_040935" description="In isoform 2." evidence="4">
    <location>
        <begin position="8"/>
        <end position="41"/>
    </location>
</feature>
<feature type="sequence conflict" description="In Ref. 2; BAD97070." evidence="5" ref="2">
    <original>T</original>
    <variation>A</variation>
    <location>
        <position position="97"/>
    </location>
</feature>
<feature type="sequence conflict" description="In Ref. 1; AAD39634 and 4; AAH64585." evidence="5" ref="1 4">
    <original>N</original>
    <variation>D</variation>
    <location>
        <position position="259"/>
    </location>
</feature>
<proteinExistence type="evidence at protein level"/>
<protein>
    <recommendedName>
        <fullName>TFIIA-alpha and beta-like factor</fullName>
    </recommendedName>
    <alternativeName>
        <fullName>General transcription factor II A, 1-like factor</fullName>
    </alternativeName>
</protein>
<comment type="function">
    <text evidence="2">May function as a testis specific transcription factor. Binds DNA in conjunction with GTF2A2 and TBP (the TATA-binding protein) and together with GTF2A2, allows mRNA transcription.</text>
</comment>
<comment type="interaction">
    <interactant intactId="EBI-10229384">
        <id>Q9UNN4</id>
    </interactant>
    <interactant intactId="EBI-517684">
        <id>Q13480</id>
        <label>GAB1</label>
    </interactant>
    <organismsDiffer>false</organismsDiffer>
    <experiments>3</experiments>
</comment>
<comment type="subcellular location">
    <subcellularLocation>
        <location evidence="3">Nucleus</location>
    </subcellularLocation>
    <text>Mainly localizes in the annulus and partly in acrosomal cap area of spermatozoa.</text>
</comment>
<comment type="alternative products">
    <event type="alternative splicing"/>
    <isoform>
        <id>Q9UNN4-1</id>
        <name>1</name>
        <sequence type="displayed"/>
    </isoform>
    <isoform>
        <id>Q9UNN4-2</id>
        <name>2</name>
        <sequence type="described" ref="VSP_040935"/>
    </isoform>
</comment>
<comment type="tissue specificity">
    <text evidence="2 3">Testis specific. Detected in adult testis mostly in round and elongating spermatids (at protein level). Detected in testis.</text>
</comment>
<comment type="induction">
    <text evidence="3">Down-regulated in Sertoli cell-only syndrome (SCOS) patients.</text>
</comment>
<comment type="similarity">
    <text evidence="5">Belongs to the TFIIA subunit 1 family.</text>
</comment>
<comment type="sequence caution" evidence="5">
    <conflict type="miscellaneous discrepancy">
        <sequence resource="EMBL-CDS" id="AAD39617"/>
    </conflict>
    <text>Chimeric cDNA. The in vivo relevance of this transcript of the STON1 (AC Q9Y6Q2) and GTF2A1L genes creating a chimeric protein of 1182 residues is uncertain.</text>
</comment>
<dbReference type="EMBL" id="AF026169">
    <property type="protein sequence ID" value="AAD39617.1"/>
    <property type="status" value="ALT_SEQ"/>
    <property type="molecule type" value="mRNA"/>
</dbReference>
<dbReference type="EMBL" id="AF106857">
    <property type="protein sequence ID" value="AAD39634.1"/>
    <property type="molecule type" value="mRNA"/>
</dbReference>
<dbReference type="EMBL" id="AK223350">
    <property type="protein sequence ID" value="BAD97070.1"/>
    <property type="molecule type" value="mRNA"/>
</dbReference>
<dbReference type="EMBL" id="AK302220">
    <property type="protein sequence ID" value="BAG63576.1"/>
    <property type="molecule type" value="mRNA"/>
</dbReference>
<dbReference type="EMBL" id="BC025991">
    <property type="protein sequence ID" value="AAH25991.1"/>
    <property type="molecule type" value="mRNA"/>
</dbReference>
<dbReference type="EMBL" id="BC064585">
    <property type="protein sequence ID" value="AAH64585.1"/>
    <property type="molecule type" value="mRNA"/>
</dbReference>
<dbReference type="CCDS" id="CCDS46281.1">
    <molecule id="Q9UNN4-1"/>
</dbReference>
<dbReference type="CCDS" id="CCDS54359.1">
    <molecule id="Q9UNN4-2"/>
</dbReference>
<dbReference type="RefSeq" id="NP_001180416.1">
    <molecule id="Q9UNN4-2"/>
    <property type="nucleotide sequence ID" value="NM_001193487.3"/>
</dbReference>
<dbReference type="RefSeq" id="NP_006863.2">
    <molecule id="Q9UNN4-1"/>
    <property type="nucleotide sequence ID" value="NM_006872.4"/>
</dbReference>
<dbReference type="SMR" id="Q9UNN4"/>
<dbReference type="BioGRID" id="116225">
    <property type="interactions" value="20"/>
</dbReference>
<dbReference type="FunCoup" id="Q9UNN4">
    <property type="interactions" value="56"/>
</dbReference>
<dbReference type="IntAct" id="Q9UNN4">
    <property type="interactions" value="18"/>
</dbReference>
<dbReference type="STRING" id="9606.ENSP00000384597"/>
<dbReference type="iPTMnet" id="Q9UNN4"/>
<dbReference type="PhosphoSitePlus" id="Q9UNN4"/>
<dbReference type="BioMuta" id="GTF2A1L"/>
<dbReference type="DMDM" id="327478545"/>
<dbReference type="MassIVE" id="Q9UNN4"/>
<dbReference type="PaxDb" id="9606-ENSP00000384597"/>
<dbReference type="PeptideAtlas" id="Q9UNN4"/>
<dbReference type="ProteomicsDB" id="85313">
    <molecule id="Q9UNN4-1"/>
</dbReference>
<dbReference type="ProteomicsDB" id="85314">
    <molecule id="Q9UNN4-2"/>
</dbReference>
<dbReference type="Antibodypedia" id="35034">
    <property type="antibodies" value="271 antibodies from 18 providers"/>
</dbReference>
<dbReference type="DNASU" id="11036"/>
<dbReference type="Ensembl" id="ENST00000403751.8">
    <molecule id="Q9UNN4-1"/>
    <property type="protein sequence ID" value="ENSP00000384597.3"/>
    <property type="gene ID" value="ENSG00000242441.8"/>
</dbReference>
<dbReference type="Ensembl" id="ENST00000430487.6">
    <molecule id="Q9UNN4-2"/>
    <property type="protein sequence ID" value="ENSP00000387896.2"/>
    <property type="gene ID" value="ENSG00000242441.8"/>
</dbReference>
<dbReference type="GeneID" id="11036"/>
<dbReference type="KEGG" id="hsa:11036"/>
<dbReference type="MANE-Select" id="ENST00000403751.8">
    <property type="protein sequence ID" value="ENSP00000384597.3"/>
    <property type="RefSeq nucleotide sequence ID" value="NM_006872.5"/>
    <property type="RefSeq protein sequence ID" value="NP_006863.2"/>
</dbReference>
<dbReference type="UCSC" id="uc002rws.4">
    <molecule id="Q9UNN4-1"/>
    <property type="organism name" value="human"/>
</dbReference>
<dbReference type="AGR" id="HGNC:30727"/>
<dbReference type="CTD" id="11036"/>
<dbReference type="DisGeNET" id="11036"/>
<dbReference type="GeneCards" id="GTF2A1L"/>
<dbReference type="HGNC" id="HGNC:30727">
    <property type="gene designation" value="GTF2A1L"/>
</dbReference>
<dbReference type="HPA" id="ENSG00000242441">
    <property type="expression patterns" value="Tissue enriched (testis)"/>
</dbReference>
<dbReference type="MIM" id="605358">
    <property type="type" value="gene"/>
</dbReference>
<dbReference type="neXtProt" id="NX_Q9UNN4"/>
<dbReference type="OpenTargets" id="ENSG00000242441"/>
<dbReference type="PharmGKB" id="PA162390383"/>
<dbReference type="VEuPathDB" id="HostDB:ENSG00000242441"/>
<dbReference type="eggNOG" id="KOG2652">
    <property type="taxonomic scope" value="Eukaryota"/>
</dbReference>
<dbReference type="GeneTree" id="ENSGT00940000163055"/>
<dbReference type="HOGENOM" id="CLU_030027_3_1_1"/>
<dbReference type="InParanoid" id="Q9UNN4"/>
<dbReference type="OMA" id="EDYDEEC"/>
<dbReference type="OrthoDB" id="6275927at2759"/>
<dbReference type="PAN-GO" id="Q9UNN4">
    <property type="GO annotations" value="2 GO annotations based on evolutionary models"/>
</dbReference>
<dbReference type="PhylomeDB" id="Q9UNN4"/>
<dbReference type="TreeFam" id="TF350445"/>
<dbReference type="PathwayCommons" id="Q9UNN4"/>
<dbReference type="SignaLink" id="Q9UNN4"/>
<dbReference type="SIGNOR" id="Q9UNN4"/>
<dbReference type="BioGRID-ORCS" id="11036">
    <property type="hits" value="20 hits in 1142 CRISPR screens"/>
</dbReference>
<dbReference type="GeneWiki" id="GTF2A1L"/>
<dbReference type="GenomeRNAi" id="11036"/>
<dbReference type="Pharos" id="Q9UNN4">
    <property type="development level" value="Tbio"/>
</dbReference>
<dbReference type="PRO" id="PR:Q9UNN4"/>
<dbReference type="Proteomes" id="UP000005640">
    <property type="component" value="Chromosome 2"/>
</dbReference>
<dbReference type="RNAct" id="Q9UNN4">
    <property type="molecule type" value="protein"/>
</dbReference>
<dbReference type="Bgee" id="ENSG00000242441">
    <property type="expression patterns" value="Expressed in left testis and 100 other cell types or tissues"/>
</dbReference>
<dbReference type="ExpressionAtlas" id="Q9UNN4">
    <property type="expression patterns" value="baseline and differential"/>
</dbReference>
<dbReference type="GO" id="GO:0005737">
    <property type="term" value="C:cytoplasm"/>
    <property type="evidence" value="ECO:0007669"/>
    <property type="project" value="Ensembl"/>
</dbReference>
<dbReference type="GO" id="GO:0001673">
    <property type="term" value="C:male germ cell nucleus"/>
    <property type="evidence" value="ECO:0007669"/>
    <property type="project" value="Ensembl"/>
</dbReference>
<dbReference type="GO" id="GO:0005672">
    <property type="term" value="C:transcription factor TFIIA complex"/>
    <property type="evidence" value="ECO:0000318"/>
    <property type="project" value="GO_Central"/>
</dbReference>
<dbReference type="GO" id="GO:0003677">
    <property type="term" value="F:DNA binding"/>
    <property type="evidence" value="ECO:0007669"/>
    <property type="project" value="UniProtKB-KW"/>
</dbReference>
<dbReference type="GO" id="GO:0003713">
    <property type="term" value="F:transcription coactivator activity"/>
    <property type="evidence" value="ECO:0000304"/>
    <property type="project" value="ProtInc"/>
</dbReference>
<dbReference type="GO" id="GO:0050890">
    <property type="term" value="P:cognition"/>
    <property type="evidence" value="ECO:0000315"/>
    <property type="project" value="UniProtKB"/>
</dbReference>
<dbReference type="GO" id="GO:0006366">
    <property type="term" value="P:transcription by RNA polymerase II"/>
    <property type="evidence" value="ECO:0000318"/>
    <property type="project" value="GO_Central"/>
</dbReference>
<dbReference type="GO" id="GO:0006367">
    <property type="term" value="P:transcription initiation at RNA polymerase II promoter"/>
    <property type="evidence" value="ECO:0007669"/>
    <property type="project" value="InterPro"/>
</dbReference>
<dbReference type="CDD" id="cd07976">
    <property type="entry name" value="TFIIA_alpha_beta_like"/>
    <property type="match status" value="2"/>
</dbReference>
<dbReference type="FunFam" id="1.10.287.100:FF:000001">
    <property type="entry name" value="Transcription initiation factor IIA subunit"/>
    <property type="match status" value="1"/>
</dbReference>
<dbReference type="FunFam" id="2.30.18.10:FF:000002">
    <property type="entry name" value="Transcription initiation factor IIA subunit 1"/>
    <property type="match status" value="1"/>
</dbReference>
<dbReference type="Gene3D" id="1.10.287.100">
    <property type="match status" value="1"/>
</dbReference>
<dbReference type="Gene3D" id="2.30.18.10">
    <property type="entry name" value="Transcription factor IIA (TFIIA), beta-barrel domain"/>
    <property type="match status" value="1"/>
</dbReference>
<dbReference type="InterPro" id="IPR004855">
    <property type="entry name" value="TFIIA_asu/bsu"/>
</dbReference>
<dbReference type="InterPro" id="IPR009088">
    <property type="entry name" value="TFIIA_b-brl"/>
</dbReference>
<dbReference type="PANTHER" id="PTHR12694:SF9">
    <property type="entry name" value="TFIIA-ALPHA AND BETA-LIKE FACTOR"/>
    <property type="match status" value="1"/>
</dbReference>
<dbReference type="PANTHER" id="PTHR12694">
    <property type="entry name" value="TRANSCRIPTION INITIATION FACTOR IIA SUBUNIT 1"/>
    <property type="match status" value="1"/>
</dbReference>
<dbReference type="Pfam" id="PF03153">
    <property type="entry name" value="TFIIA"/>
    <property type="match status" value="1"/>
</dbReference>
<dbReference type="SMART" id="SM01371">
    <property type="entry name" value="TFIIA"/>
    <property type="match status" value="1"/>
</dbReference>
<dbReference type="SUPFAM" id="SSF47396">
    <property type="entry name" value="Transcription factor IIA (TFIIA), alpha-helical domain"/>
    <property type="match status" value="1"/>
</dbReference>
<dbReference type="SUPFAM" id="SSF50784">
    <property type="entry name" value="Transcription factor IIA (TFIIA), beta-barrel domain"/>
    <property type="match status" value="1"/>
</dbReference>
<sequence length="478" mass="52444">MACLNPVPKLYRSVIEDVIEGVRNLFAEEGIEEQVLKDLKQLWETKVLQSKATEDFFRNSIQSPLFTLQLPHSLHQTLQSSTASLVIPAGRTLPSFTTAELGTSNSSANFTFPGYPIHVPAGVTLQTVSGHLYKVNVPIMVTETSGRAGILQHPIQQVFQQLGQPSVIQTSVPQLNPWSLQATTEKSQRIETVLQQPAILPSGPVDRKHLENATSDILVSPGNEHKIVPEALLCHQESSHYISLPGVVFSPQVSQTNSNVESVLSGSASMAQNLHDESLSTSPHGALHQHVTDIQLHILKNRMYGCDSVKQPRNIEEPSNIPVSEKDSNSQVDLSIRVTDDDIGEIIQVDGSGDTSSNEEIGSTRDADENEFLGNIDGGDLKVPEEEADSISNEDSATNSSDNEDPQVNIVEEDPLNSGDDVSEQDVPDLFDTDNVIVCQYDKIHRSKNKWKFYLKDGVMCFGGRDYVFAKAIGDAEW</sequence>
<gene>
    <name type="primary">GTF2A1L</name>
    <name type="synonym">ALF</name>
    <name type="synonym">GTF2A1LF</name>
</gene>
<keyword id="KW-0025">Alternative splicing</keyword>
<keyword id="KW-0238">DNA-binding</keyword>
<keyword id="KW-0539">Nucleus</keyword>
<keyword id="KW-1267">Proteomics identification</keyword>
<keyword id="KW-1185">Reference proteome</keyword>
<keyword id="KW-0804">Transcription</keyword>
<keyword id="KW-0805">Transcription regulation</keyword>
<name>TF2AY_HUMAN</name>
<organism>
    <name type="scientific">Homo sapiens</name>
    <name type="common">Human</name>
    <dbReference type="NCBI Taxonomy" id="9606"/>
    <lineage>
        <taxon>Eukaryota</taxon>
        <taxon>Metazoa</taxon>
        <taxon>Chordata</taxon>
        <taxon>Craniata</taxon>
        <taxon>Vertebrata</taxon>
        <taxon>Euteleostomi</taxon>
        <taxon>Mammalia</taxon>
        <taxon>Eutheria</taxon>
        <taxon>Euarchontoglires</taxon>
        <taxon>Primates</taxon>
        <taxon>Haplorrhini</taxon>
        <taxon>Catarrhini</taxon>
        <taxon>Hominidae</taxon>
        <taxon>Homo</taxon>
    </lineage>
</organism>